<organism>
    <name type="scientific">Meyerozyma guilliermondii (strain ATCC 6260 / CBS 566 / DSM 6381 / JCM 1539 / NBRC 10279 / NRRL Y-324)</name>
    <name type="common">Yeast</name>
    <name type="synonym">Candida guilliermondii</name>
    <dbReference type="NCBI Taxonomy" id="294746"/>
    <lineage>
        <taxon>Eukaryota</taxon>
        <taxon>Fungi</taxon>
        <taxon>Dikarya</taxon>
        <taxon>Ascomycota</taxon>
        <taxon>Saccharomycotina</taxon>
        <taxon>Pichiomycetes</taxon>
        <taxon>Debaryomycetaceae</taxon>
        <taxon>Meyerozyma</taxon>
    </lineage>
</organism>
<sequence>MPVDPEKLAKLQQGAAKKVGGQRVKAKKVKSEQDDTKLMEALGKLKATKVNAVEEANFFKEDGKVLHFKRVGVQSAAQHNVCAFTGYPQEKDVTQLIPQILPQLGAENLEILRQLAEQIQAGKTPSMGGENAGADEDIPDLIEGQKFDEVE</sequence>
<keyword id="KW-0963">Cytoplasm</keyword>
<keyword id="KW-0539">Nucleus</keyword>
<keyword id="KW-0653">Protein transport</keyword>
<keyword id="KW-1185">Reference proteome</keyword>
<keyword id="KW-0678">Repressor</keyword>
<keyword id="KW-0804">Transcription</keyword>
<keyword id="KW-0805">Transcription regulation</keyword>
<keyword id="KW-0813">Transport</keyword>
<accession>A5DF06</accession>
<reference key="1">
    <citation type="journal article" date="2009" name="Nature">
        <title>Evolution of pathogenicity and sexual reproduction in eight Candida genomes.</title>
        <authorList>
            <person name="Butler G."/>
            <person name="Rasmussen M.D."/>
            <person name="Lin M.F."/>
            <person name="Santos M.A.S."/>
            <person name="Sakthikumar S."/>
            <person name="Munro C.A."/>
            <person name="Rheinbay E."/>
            <person name="Grabherr M."/>
            <person name="Forche A."/>
            <person name="Reedy J.L."/>
            <person name="Agrafioti I."/>
            <person name="Arnaud M.B."/>
            <person name="Bates S."/>
            <person name="Brown A.J.P."/>
            <person name="Brunke S."/>
            <person name="Costanzo M.C."/>
            <person name="Fitzpatrick D.A."/>
            <person name="de Groot P.W.J."/>
            <person name="Harris D."/>
            <person name="Hoyer L.L."/>
            <person name="Hube B."/>
            <person name="Klis F.M."/>
            <person name="Kodira C."/>
            <person name="Lennard N."/>
            <person name="Logue M.E."/>
            <person name="Martin R."/>
            <person name="Neiman A.M."/>
            <person name="Nikolaou E."/>
            <person name="Quail M.A."/>
            <person name="Quinn J."/>
            <person name="Santos M.C."/>
            <person name="Schmitzberger F.F."/>
            <person name="Sherlock G."/>
            <person name="Shah P."/>
            <person name="Silverstein K.A.T."/>
            <person name="Skrzypek M.S."/>
            <person name="Soll D."/>
            <person name="Staggs R."/>
            <person name="Stansfield I."/>
            <person name="Stumpf M.P.H."/>
            <person name="Sudbery P.E."/>
            <person name="Srikantha T."/>
            <person name="Zeng Q."/>
            <person name="Berman J."/>
            <person name="Berriman M."/>
            <person name="Heitman J."/>
            <person name="Gow N.A.R."/>
            <person name="Lorenz M.C."/>
            <person name="Birren B.W."/>
            <person name="Kellis M."/>
            <person name="Cuomo C.A."/>
        </authorList>
    </citation>
    <scope>NUCLEOTIDE SEQUENCE [LARGE SCALE GENOMIC DNA]</scope>
    <source>
        <strain>ATCC 6260 / CBS 566 / DSM 6381 / JCM 1539 / NBRC 10279 / NRRL Y-324</strain>
    </source>
</reference>
<name>NACB_PICGU</name>
<feature type="chain" id="PRO_0000294531" description="Nascent polypeptide-associated complex subunit beta">
    <location>
        <begin position="1"/>
        <end position="151"/>
    </location>
</feature>
<feature type="domain" description="NAC-A/B" evidence="2">
    <location>
        <begin position="32"/>
        <end position="97"/>
    </location>
</feature>
<feature type="region of interest" description="Disordered" evidence="3">
    <location>
        <begin position="122"/>
        <end position="151"/>
    </location>
</feature>
<gene>
    <name type="primary">EGD1</name>
    <name type="ORF">PGUG_01857</name>
</gene>
<dbReference type="EMBL" id="CH408156">
    <property type="protein sequence ID" value="EDK37759.1"/>
    <property type="status" value="ALT_INIT"/>
    <property type="molecule type" value="Genomic_DNA"/>
</dbReference>
<dbReference type="RefSeq" id="XP_001486186.1">
    <property type="nucleotide sequence ID" value="XM_001486136.1"/>
</dbReference>
<dbReference type="SMR" id="A5DF06"/>
<dbReference type="FunCoup" id="A5DF06">
    <property type="interactions" value="1211"/>
</dbReference>
<dbReference type="STRING" id="294746.A5DF06"/>
<dbReference type="GeneID" id="5128176"/>
<dbReference type="KEGG" id="pgu:PGUG_01857"/>
<dbReference type="eggNOG" id="KOG2240">
    <property type="taxonomic scope" value="Eukaryota"/>
</dbReference>
<dbReference type="HOGENOM" id="CLU_098726_2_0_1"/>
<dbReference type="InParanoid" id="A5DF06"/>
<dbReference type="OrthoDB" id="8033832at2759"/>
<dbReference type="Proteomes" id="UP000001997">
    <property type="component" value="Unassembled WGS sequence"/>
</dbReference>
<dbReference type="GO" id="GO:0005737">
    <property type="term" value="C:cytoplasm"/>
    <property type="evidence" value="ECO:0007669"/>
    <property type="project" value="UniProtKB-SubCell"/>
</dbReference>
<dbReference type="GO" id="GO:0005634">
    <property type="term" value="C:nucleus"/>
    <property type="evidence" value="ECO:0007669"/>
    <property type="project" value="UniProtKB-SubCell"/>
</dbReference>
<dbReference type="GO" id="GO:0015031">
    <property type="term" value="P:protein transport"/>
    <property type="evidence" value="ECO:0007669"/>
    <property type="project" value="UniProtKB-KW"/>
</dbReference>
<dbReference type="CDD" id="cd22055">
    <property type="entry name" value="NAC_BTF3"/>
    <property type="match status" value="1"/>
</dbReference>
<dbReference type="FunFam" id="2.20.70.30:FF:000001">
    <property type="entry name" value="Transcription factor BTF3 homolog"/>
    <property type="match status" value="1"/>
</dbReference>
<dbReference type="Gene3D" id="2.20.70.30">
    <property type="entry name" value="Nascent polypeptide-associated complex domain"/>
    <property type="match status" value="1"/>
</dbReference>
<dbReference type="InterPro" id="IPR039370">
    <property type="entry name" value="BTF3"/>
</dbReference>
<dbReference type="InterPro" id="IPR038187">
    <property type="entry name" value="NAC_A/B_dom_sf"/>
</dbReference>
<dbReference type="InterPro" id="IPR002715">
    <property type="entry name" value="Nas_poly-pep-assoc_cplx_dom"/>
</dbReference>
<dbReference type="PANTHER" id="PTHR10351">
    <property type="entry name" value="TRANSCRIPTION FACTOR BTF3 FAMILY MEMBER"/>
    <property type="match status" value="1"/>
</dbReference>
<dbReference type="Pfam" id="PF01849">
    <property type="entry name" value="NAC"/>
    <property type="match status" value="1"/>
</dbReference>
<dbReference type="SMART" id="SM01407">
    <property type="entry name" value="NAC"/>
    <property type="match status" value="1"/>
</dbReference>
<dbReference type="PROSITE" id="PS51151">
    <property type="entry name" value="NAC_AB"/>
    <property type="match status" value="1"/>
</dbReference>
<protein>
    <recommendedName>
        <fullName>Nascent polypeptide-associated complex subunit beta</fullName>
        <shortName>NAC-beta</shortName>
    </recommendedName>
    <alternativeName>
        <fullName>Beta-NAC</fullName>
    </alternativeName>
</protein>
<proteinExistence type="inferred from homology"/>
<evidence type="ECO:0000250" key="1"/>
<evidence type="ECO:0000255" key="2">
    <source>
        <dbReference type="PROSITE-ProRule" id="PRU00507"/>
    </source>
</evidence>
<evidence type="ECO:0000256" key="3">
    <source>
        <dbReference type="SAM" id="MobiDB-lite"/>
    </source>
</evidence>
<evidence type="ECO:0000305" key="4"/>
<comment type="function">
    <text evidence="1">Component of the nascent polypeptide-associated complex (NAC), a dynamic component of the ribosomal exit tunnel, protecting the emerging polypeptides from interaction with other cytoplasmic proteins to ensure appropriate nascent protein targeting. The NAC complex also promotes mitochondrial protein import by enhancing productive ribosome interactions with the outer mitochondrial membrane and blocks the inappropriate interaction of ribosomes translating non-secretory nascent polypeptides with translocation sites in the membrane of the endoplasmic reticulum. EGD1 may act as a transcription factor that exert a negative effect on the expression of several genes that are transcribed by RNA polymerase II.</text>
</comment>
<comment type="subunit">
    <text evidence="1">Part of the nascent polypeptide-associated complex (NAC), consisting of EGD2 and EGD1. NAC associates with ribosomes via EGD1 (By similarity).</text>
</comment>
<comment type="subcellular location">
    <subcellularLocation>
        <location evidence="1">Cytoplasm</location>
    </subcellularLocation>
    <subcellularLocation>
        <location evidence="1">Nucleus</location>
    </subcellularLocation>
    <text evidence="1">Predominantly cytoplasmic, may also transiently localize to the nucleus.</text>
</comment>
<comment type="similarity">
    <text evidence="4">Belongs to the NAC-beta family.</text>
</comment>
<comment type="sequence caution" evidence="4">
    <conflict type="erroneous initiation">
        <sequence resource="EMBL-CDS" id="EDK37759"/>
    </conflict>
</comment>